<gene>
    <name evidence="1" type="primary">cobQ</name>
    <name type="ordered locus">PMT9312_1259</name>
</gene>
<reference key="1">
    <citation type="journal article" date="2006" name="Science">
        <title>Genomic islands and the ecology and evolution of Prochlorococcus.</title>
        <authorList>
            <person name="Coleman M.L."/>
            <person name="Sullivan M.B."/>
            <person name="Martiny A.C."/>
            <person name="Steglich C."/>
            <person name="Barry K."/>
            <person name="Delong E.F."/>
            <person name="Chisholm S.W."/>
        </authorList>
    </citation>
    <scope>NUCLEOTIDE SEQUENCE [LARGE SCALE GENOMIC DNA]</scope>
    <source>
        <strain>MIT 9312</strain>
    </source>
</reference>
<dbReference type="EMBL" id="CP000111">
    <property type="protein sequence ID" value="ABB50318.1"/>
    <property type="molecule type" value="Genomic_DNA"/>
</dbReference>
<dbReference type="RefSeq" id="WP_011376805.1">
    <property type="nucleotide sequence ID" value="NC_007577.1"/>
</dbReference>
<dbReference type="SMR" id="Q319X7"/>
<dbReference type="STRING" id="74546.PMT9312_1259"/>
<dbReference type="KEGG" id="pmi:PMT9312_1259"/>
<dbReference type="eggNOG" id="COG1492">
    <property type="taxonomic scope" value="Bacteria"/>
</dbReference>
<dbReference type="HOGENOM" id="CLU_019250_2_2_3"/>
<dbReference type="OrthoDB" id="9808302at2"/>
<dbReference type="UniPathway" id="UPA00148"/>
<dbReference type="Proteomes" id="UP000002715">
    <property type="component" value="Chromosome"/>
</dbReference>
<dbReference type="GO" id="GO:0015420">
    <property type="term" value="F:ABC-type vitamin B12 transporter activity"/>
    <property type="evidence" value="ECO:0007669"/>
    <property type="project" value="UniProtKB-UniRule"/>
</dbReference>
<dbReference type="GO" id="GO:0003824">
    <property type="term" value="F:catalytic activity"/>
    <property type="evidence" value="ECO:0007669"/>
    <property type="project" value="InterPro"/>
</dbReference>
<dbReference type="GO" id="GO:0009236">
    <property type="term" value="P:cobalamin biosynthetic process"/>
    <property type="evidence" value="ECO:0007669"/>
    <property type="project" value="UniProtKB-UniRule"/>
</dbReference>
<dbReference type="CDD" id="cd01750">
    <property type="entry name" value="GATase1_CobQ"/>
    <property type="match status" value="1"/>
</dbReference>
<dbReference type="Gene3D" id="3.40.50.880">
    <property type="match status" value="1"/>
</dbReference>
<dbReference type="Gene3D" id="3.40.50.300">
    <property type="entry name" value="P-loop containing nucleotide triphosphate hydrolases"/>
    <property type="match status" value="1"/>
</dbReference>
<dbReference type="HAMAP" id="MF_00028">
    <property type="entry name" value="CobQ"/>
    <property type="match status" value="1"/>
</dbReference>
<dbReference type="InterPro" id="IPR029062">
    <property type="entry name" value="Class_I_gatase-like"/>
</dbReference>
<dbReference type="InterPro" id="IPR002586">
    <property type="entry name" value="CobQ/CobB/MinD/ParA_Nub-bd_dom"/>
</dbReference>
<dbReference type="InterPro" id="IPR033949">
    <property type="entry name" value="CobQ_GATase1"/>
</dbReference>
<dbReference type="InterPro" id="IPR004459">
    <property type="entry name" value="CobQ_synth"/>
</dbReference>
<dbReference type="InterPro" id="IPR011698">
    <property type="entry name" value="GATase_3"/>
</dbReference>
<dbReference type="InterPro" id="IPR027417">
    <property type="entry name" value="P-loop_NTPase"/>
</dbReference>
<dbReference type="NCBIfam" id="TIGR00313">
    <property type="entry name" value="cobQ"/>
    <property type="match status" value="1"/>
</dbReference>
<dbReference type="NCBIfam" id="NF001989">
    <property type="entry name" value="PRK00784.1"/>
    <property type="match status" value="1"/>
</dbReference>
<dbReference type="PANTHER" id="PTHR21343:SF1">
    <property type="entry name" value="COBYRIC ACID SYNTHASE"/>
    <property type="match status" value="1"/>
</dbReference>
<dbReference type="PANTHER" id="PTHR21343">
    <property type="entry name" value="DETHIOBIOTIN SYNTHETASE"/>
    <property type="match status" value="1"/>
</dbReference>
<dbReference type="Pfam" id="PF01656">
    <property type="entry name" value="CbiA"/>
    <property type="match status" value="1"/>
</dbReference>
<dbReference type="Pfam" id="PF07685">
    <property type="entry name" value="GATase_3"/>
    <property type="match status" value="1"/>
</dbReference>
<dbReference type="SUPFAM" id="SSF52317">
    <property type="entry name" value="Class I glutamine amidotransferase-like"/>
    <property type="match status" value="1"/>
</dbReference>
<dbReference type="SUPFAM" id="SSF52540">
    <property type="entry name" value="P-loop containing nucleoside triphosphate hydrolases"/>
    <property type="match status" value="1"/>
</dbReference>
<dbReference type="PROSITE" id="PS51274">
    <property type="entry name" value="GATASE_COBBQ"/>
    <property type="match status" value="1"/>
</dbReference>
<name>COBQ_PROM9</name>
<feature type="chain" id="PRO_1000002372" description="Cobyric acid synthase">
    <location>
        <begin position="1"/>
        <end position="509"/>
    </location>
</feature>
<feature type="domain" description="GATase cobBQ-type" evidence="1">
    <location>
        <begin position="262"/>
        <end position="459"/>
    </location>
</feature>
<feature type="active site" description="Nucleophile" evidence="1">
    <location>
        <position position="343"/>
    </location>
</feature>
<feature type="active site" evidence="1">
    <location>
        <position position="451"/>
    </location>
</feature>
<organism>
    <name type="scientific">Prochlorococcus marinus (strain MIT 9312)</name>
    <dbReference type="NCBI Taxonomy" id="74546"/>
    <lineage>
        <taxon>Bacteria</taxon>
        <taxon>Bacillati</taxon>
        <taxon>Cyanobacteriota</taxon>
        <taxon>Cyanophyceae</taxon>
        <taxon>Synechococcales</taxon>
        <taxon>Prochlorococcaceae</taxon>
        <taxon>Prochlorococcus</taxon>
    </lineage>
</organism>
<protein>
    <recommendedName>
        <fullName evidence="1">Cobyric acid synthase</fullName>
    </recommendedName>
</protein>
<keyword id="KW-0169">Cobalamin biosynthesis</keyword>
<keyword id="KW-0315">Glutamine amidotransferase</keyword>
<accession>Q319X7</accession>
<proteinExistence type="inferred from homology"/>
<sequence length="509" mass="57798">MYLEEKLHKIKKPIMVLGTSSGAGKSLTVTAICRILKNLAEQPIPFKGQNMSNNAWVDWEGGEMAYSQALQAFACGVNPSSEMNPILLKPQGNSVSEVIHLGKSIGTTSAKNYYQDWFIPGWEVIKKSLNSIYKKNPNCRLIIEGAGSPVEMNLKHRDLTNLKIAKYLKANCILVTDIERGGVFAQIIGTLELMKPEEKKLIKGIIINRFRGDLSLFEEGKKWIEEKTQIPVIGIVPWLNDSFPPEDSLDLLENKSRFTNAEIKVGIIKLPSISNFSDFDPLENEESILIEWIRESQNLKKYDFIILPGSKQTIKDQMFLEKTGLSHDLREYSNNKGHIIGICGGLQMLGTFLEDPFLKEGSKTFSEQKIKGIGLLPLRTTFFEEKLTRQISSESLWPCQSKINGFEIHNGQTELDNTQNSLKINPIFKDLNLGWYKENKEGGTIAGTYIHGIFENDIWRDQYINLIRMNKKLPALKKRTSSYKNKREKIIENLANEFNKHLNLSSLLN</sequence>
<evidence type="ECO:0000255" key="1">
    <source>
        <dbReference type="HAMAP-Rule" id="MF_00028"/>
    </source>
</evidence>
<comment type="function">
    <text evidence="1">Catalyzes amidations at positions B, D, E, and G on adenosylcobyrinic A,C-diamide. NH(2) groups are provided by glutamine, and one molecule of ATP is hydrogenolyzed for each amidation.</text>
</comment>
<comment type="pathway">
    <text evidence="1">Cofactor biosynthesis; adenosylcobalamin biosynthesis.</text>
</comment>
<comment type="similarity">
    <text evidence="1">Belongs to the CobB/CobQ family. CobQ subfamily.</text>
</comment>